<accession>P9WFM7</accession>
<accession>L0TB00</accession>
<accession>P67236</accession>
<accession>Q10826</accession>
<reference key="1">
    <citation type="journal article" date="1998" name="Nature">
        <title>Deciphering the biology of Mycobacterium tuberculosis from the complete genome sequence.</title>
        <authorList>
            <person name="Cole S.T."/>
            <person name="Brosch R."/>
            <person name="Parkhill J."/>
            <person name="Garnier T."/>
            <person name="Churcher C.M."/>
            <person name="Harris D.E."/>
            <person name="Gordon S.V."/>
            <person name="Eiglmeier K."/>
            <person name="Gas S."/>
            <person name="Barry C.E. III"/>
            <person name="Tekaia F."/>
            <person name="Badcock K."/>
            <person name="Basham D."/>
            <person name="Brown D."/>
            <person name="Chillingworth T."/>
            <person name="Connor R."/>
            <person name="Davies R.M."/>
            <person name="Devlin K."/>
            <person name="Feltwell T."/>
            <person name="Gentles S."/>
            <person name="Hamlin N."/>
            <person name="Holroyd S."/>
            <person name="Hornsby T."/>
            <person name="Jagels K."/>
            <person name="Krogh A."/>
            <person name="McLean J."/>
            <person name="Moule S."/>
            <person name="Murphy L.D."/>
            <person name="Oliver S."/>
            <person name="Osborne J."/>
            <person name="Quail M.A."/>
            <person name="Rajandream M.A."/>
            <person name="Rogers J."/>
            <person name="Rutter S."/>
            <person name="Seeger K."/>
            <person name="Skelton S."/>
            <person name="Squares S."/>
            <person name="Squares R."/>
            <person name="Sulston J.E."/>
            <person name="Taylor K."/>
            <person name="Whitehead S."/>
            <person name="Barrell B.G."/>
        </authorList>
    </citation>
    <scope>NUCLEOTIDE SEQUENCE [LARGE SCALE GENOMIC DNA]</scope>
    <source>
        <strain>ATCC 25618 / H37Rv</strain>
    </source>
</reference>
<reference key="2">
    <citation type="journal article" date="2007" name="Microbiology">
        <title>Experimental determination of translational starts using peptide mass mapping and tandem mass spectrometry within the proteome of Mycobacterium tuberculosis.</title>
        <authorList>
            <person name="Rison S.C."/>
            <person name="Mattow J."/>
            <person name="Jungblut P.R."/>
            <person name="Stoker N.G."/>
        </authorList>
    </citation>
    <scope>IDENTIFICATION BY MASS SPECTROMETRY</scope>
    <scope>DETERMINATION OF TRANSLATIONAL START SITE</scope>
    <scope>CLEAVAGE OF INITIATOR METHIONINE</scope>
    <source>
        <strain>ATCC 25618 / H37Rv</strain>
    </source>
</reference>
<reference key="3">
    <citation type="journal article" date="2011" name="Mol. Cell. Proteomics">
        <title>Proteogenomic analysis of Mycobacterium tuberculosis by high resolution mass spectrometry.</title>
        <authorList>
            <person name="Kelkar D.S."/>
            <person name="Kumar D."/>
            <person name="Kumar P."/>
            <person name="Balakrishnan L."/>
            <person name="Muthusamy B."/>
            <person name="Yadav A.K."/>
            <person name="Shrivastava P."/>
            <person name="Marimuthu A."/>
            <person name="Anand S."/>
            <person name="Sundaram H."/>
            <person name="Kingsbury R."/>
            <person name="Harsha H.C."/>
            <person name="Nair B."/>
            <person name="Prasad T.S."/>
            <person name="Chauhan D.S."/>
            <person name="Katoch K."/>
            <person name="Katoch V.M."/>
            <person name="Kumar P."/>
            <person name="Chaerkady R."/>
            <person name="Ramachandran S."/>
            <person name="Dash D."/>
            <person name="Pandey A."/>
        </authorList>
    </citation>
    <scope>IDENTIFICATION BY MASS SPECTROMETRY [LARGE SCALE ANALYSIS]</scope>
    <source>
        <strain>ATCC 25618 / H37Rv</strain>
    </source>
</reference>
<protein>
    <recommendedName>
        <fullName evidence="1">RNA-binding protein KhpA</fullName>
    </recommendedName>
    <alternativeName>
        <fullName evidence="1">KH-domain protein A</fullName>
    </alternativeName>
</protein>
<dbReference type="EMBL" id="AL123456">
    <property type="protein sequence ID" value="CCP45710.1"/>
    <property type="molecule type" value="Genomic_DNA"/>
</dbReference>
<dbReference type="PIR" id="G70927">
    <property type="entry name" value="G70927"/>
</dbReference>
<dbReference type="RefSeq" id="NP_217424.1">
    <property type="nucleotide sequence ID" value="NC_000962.3"/>
</dbReference>
<dbReference type="RefSeq" id="WP_003414728.1">
    <property type="nucleotide sequence ID" value="NZ_NVQJ01000006.1"/>
</dbReference>
<dbReference type="PDB" id="7XQC">
    <property type="method" value="X-ray"/>
    <property type="resolution" value="2.80 A"/>
    <property type="chains" value="A/B/C/D=1-80"/>
</dbReference>
<dbReference type="PDBsum" id="7XQC"/>
<dbReference type="SMR" id="P9WFM7"/>
<dbReference type="FunCoup" id="P9WFM7">
    <property type="interactions" value="22"/>
</dbReference>
<dbReference type="STRING" id="83332.Rv2908c"/>
<dbReference type="PaxDb" id="83332-Rv2908c"/>
<dbReference type="DNASU" id="887336"/>
<dbReference type="GeneID" id="887336"/>
<dbReference type="KEGG" id="mtu:Rv2908c"/>
<dbReference type="KEGG" id="mtv:RVBD_2908c"/>
<dbReference type="TubercuList" id="Rv2908c"/>
<dbReference type="eggNOG" id="COG1837">
    <property type="taxonomic scope" value="Bacteria"/>
</dbReference>
<dbReference type="InParanoid" id="P9WFM7"/>
<dbReference type="OrthoDB" id="9812389at2"/>
<dbReference type="PhylomeDB" id="P9WFM7"/>
<dbReference type="Proteomes" id="UP000001584">
    <property type="component" value="Chromosome"/>
</dbReference>
<dbReference type="GO" id="GO:0005737">
    <property type="term" value="C:cytoplasm"/>
    <property type="evidence" value="ECO:0007669"/>
    <property type="project" value="UniProtKB-SubCell"/>
</dbReference>
<dbReference type="GO" id="GO:0003723">
    <property type="term" value="F:RNA binding"/>
    <property type="evidence" value="ECO:0007669"/>
    <property type="project" value="UniProtKB-UniRule"/>
</dbReference>
<dbReference type="CDD" id="cd22533">
    <property type="entry name" value="KH-II_YlqC-like"/>
    <property type="match status" value="1"/>
</dbReference>
<dbReference type="Gene3D" id="3.30.300.20">
    <property type="match status" value="1"/>
</dbReference>
<dbReference type="HAMAP" id="MF_00088">
    <property type="entry name" value="KhpA"/>
    <property type="match status" value="1"/>
</dbReference>
<dbReference type="InterPro" id="IPR015946">
    <property type="entry name" value="KH_dom-like_a/b"/>
</dbReference>
<dbReference type="InterPro" id="IPR009019">
    <property type="entry name" value="KH_sf_prok-type"/>
</dbReference>
<dbReference type="InterPro" id="IPR020627">
    <property type="entry name" value="KhpA"/>
</dbReference>
<dbReference type="NCBIfam" id="NF002761">
    <property type="entry name" value="PRK02821.1"/>
    <property type="match status" value="1"/>
</dbReference>
<dbReference type="PANTHER" id="PTHR34654:SF1">
    <property type="entry name" value="RNA-BINDING PROTEIN KHPA"/>
    <property type="match status" value="1"/>
</dbReference>
<dbReference type="PANTHER" id="PTHR34654">
    <property type="entry name" value="UPF0109 PROTEIN SCO5592"/>
    <property type="match status" value="1"/>
</dbReference>
<dbReference type="Pfam" id="PF13083">
    <property type="entry name" value="KH_KhpA-B"/>
    <property type="match status" value="1"/>
</dbReference>
<dbReference type="SUPFAM" id="SSF54814">
    <property type="entry name" value="Prokaryotic type KH domain (KH-domain type II)"/>
    <property type="match status" value="1"/>
</dbReference>
<dbReference type="PROSITE" id="PS50084">
    <property type="entry name" value="KH_TYPE_1"/>
    <property type="match status" value="1"/>
</dbReference>
<sequence length="80" mass="8521">MSAVVVDAVEHLVRGIVDNPDDVRVDLITSRRGRTVEVHVHPDDLGKVIGRGGRTATALRTLVAGIGGRGIRVDVVDTDQ</sequence>
<name>KHPA_MYCTU</name>
<feature type="initiator methionine" description="Removed" evidence="2">
    <location>
        <position position="1"/>
    </location>
</feature>
<feature type="chain" id="PRO_0000163231" description="RNA-binding protein KhpA">
    <location>
        <begin position="2"/>
        <end position="80"/>
    </location>
</feature>
<feature type="domain" description="KH" evidence="1">
    <location>
        <begin position="33"/>
        <end position="80"/>
    </location>
</feature>
<feature type="helix" evidence="3">
    <location>
        <begin position="3"/>
        <end position="17"/>
    </location>
</feature>
<feature type="strand" evidence="3">
    <location>
        <begin position="25"/>
        <end position="31"/>
    </location>
</feature>
<feature type="strand" evidence="3">
    <location>
        <begin position="34"/>
        <end position="40"/>
    </location>
</feature>
<organism>
    <name type="scientific">Mycobacterium tuberculosis (strain ATCC 25618 / H37Rv)</name>
    <dbReference type="NCBI Taxonomy" id="83332"/>
    <lineage>
        <taxon>Bacteria</taxon>
        <taxon>Bacillati</taxon>
        <taxon>Actinomycetota</taxon>
        <taxon>Actinomycetes</taxon>
        <taxon>Mycobacteriales</taxon>
        <taxon>Mycobacteriaceae</taxon>
        <taxon>Mycobacterium</taxon>
        <taxon>Mycobacterium tuberculosis complex</taxon>
    </lineage>
</organism>
<proteinExistence type="evidence at protein level"/>
<gene>
    <name evidence="1" type="primary">khpA</name>
    <name type="ordered locus">Rv2908c</name>
    <name type="ORF">MTCY274.40c</name>
</gene>
<keyword id="KW-0002">3D-structure</keyword>
<keyword id="KW-0963">Cytoplasm</keyword>
<keyword id="KW-1185">Reference proteome</keyword>
<keyword id="KW-0694">RNA-binding</keyword>
<evidence type="ECO:0000255" key="1">
    <source>
        <dbReference type="HAMAP-Rule" id="MF_00088"/>
    </source>
</evidence>
<evidence type="ECO:0000269" key="2">
    <source>
    </source>
</evidence>
<evidence type="ECO:0007829" key="3">
    <source>
        <dbReference type="PDB" id="7XQC"/>
    </source>
</evidence>
<comment type="function">
    <text evidence="1">A probable RNA-binding protein.</text>
</comment>
<comment type="subcellular location">
    <subcellularLocation>
        <location evidence="1">Cytoplasm</location>
    </subcellularLocation>
</comment>
<comment type="similarity">
    <text evidence="1">Belongs to the KhpA RNA-binding protein family.</text>
</comment>